<accession>A2RCX9</accession>
<reference key="1">
    <citation type="journal article" date="2007" name="J. Bacteriol.">
        <title>Complete genome of acute rheumatic fever-associated serotype M5 Streptococcus pyogenes strain Manfredo.</title>
        <authorList>
            <person name="Holden M.T.G."/>
            <person name="Scott A."/>
            <person name="Cherevach I."/>
            <person name="Chillingworth T."/>
            <person name="Churcher C."/>
            <person name="Cronin A."/>
            <person name="Dowd L."/>
            <person name="Feltwell T."/>
            <person name="Hamlin N."/>
            <person name="Holroyd S."/>
            <person name="Jagels K."/>
            <person name="Moule S."/>
            <person name="Mungall K."/>
            <person name="Quail M.A."/>
            <person name="Price C."/>
            <person name="Rabbinowitsch E."/>
            <person name="Sharp S."/>
            <person name="Skelton J."/>
            <person name="Whitehead S."/>
            <person name="Barrell B.G."/>
            <person name="Kehoe M."/>
            <person name="Parkhill J."/>
        </authorList>
    </citation>
    <scope>NUCLEOTIDE SEQUENCE [LARGE SCALE GENOMIC DNA]</scope>
    <source>
        <strain>Manfredo</strain>
    </source>
</reference>
<sequence>MALFRKKDKYIRITPNNFLKGSVSHNVPEVPDELFAKCPACKHMIYKKDLGLAKICPTCSYNFRISAQERLTLTVDEGSFQELFTSIETKDPLRFPGYQEKLQKAKETTGLHEAVLTGKAMVKGQQIALAIMDSHFIMASMGTVVGEKITRLFELAIEENLPVVIFTASGGARMQEGIMSLMQMAKVSAAVKRHSNAGLFYLTILTDPTTGGVTASFAMEGDIILAEPQSLVGFAGRRVIETTVRENLPDDFQKAEFLQDHGFVDAIVKRTELRDKIAHLVAFHGGGQ</sequence>
<keyword id="KW-0067">ATP-binding</keyword>
<keyword id="KW-0963">Cytoplasm</keyword>
<keyword id="KW-0275">Fatty acid biosynthesis</keyword>
<keyword id="KW-0276">Fatty acid metabolism</keyword>
<keyword id="KW-0444">Lipid biosynthesis</keyword>
<keyword id="KW-0443">Lipid metabolism</keyword>
<keyword id="KW-0479">Metal-binding</keyword>
<keyword id="KW-0547">Nucleotide-binding</keyword>
<keyword id="KW-0808">Transferase</keyword>
<keyword id="KW-0862">Zinc</keyword>
<keyword id="KW-0863">Zinc-finger</keyword>
<protein>
    <recommendedName>
        <fullName evidence="1">Acetyl-coenzyme A carboxylase carboxyl transferase subunit beta</fullName>
        <shortName evidence="1">ACCase subunit beta</shortName>
        <shortName evidence="1">Acetyl-CoA carboxylase carboxyltransferase subunit beta</shortName>
        <ecNumber evidence="1">2.1.3.15</ecNumber>
    </recommendedName>
</protein>
<comment type="function">
    <text evidence="1">Component of the acetyl coenzyme A carboxylase (ACC) complex. Biotin carboxylase (BC) catalyzes the carboxylation of biotin on its carrier protein (BCCP) and then the CO(2) group is transferred by the transcarboxylase to acetyl-CoA to form malonyl-CoA.</text>
</comment>
<comment type="catalytic activity">
    <reaction evidence="1">
        <text>N(6)-carboxybiotinyl-L-lysyl-[protein] + acetyl-CoA = N(6)-biotinyl-L-lysyl-[protein] + malonyl-CoA</text>
        <dbReference type="Rhea" id="RHEA:54728"/>
        <dbReference type="Rhea" id="RHEA-COMP:10505"/>
        <dbReference type="Rhea" id="RHEA-COMP:10506"/>
        <dbReference type="ChEBI" id="CHEBI:57288"/>
        <dbReference type="ChEBI" id="CHEBI:57384"/>
        <dbReference type="ChEBI" id="CHEBI:83144"/>
        <dbReference type="ChEBI" id="CHEBI:83145"/>
        <dbReference type="EC" id="2.1.3.15"/>
    </reaction>
</comment>
<comment type="cofactor">
    <cofactor evidence="1">
        <name>Zn(2+)</name>
        <dbReference type="ChEBI" id="CHEBI:29105"/>
    </cofactor>
    <text evidence="1">Binds 1 zinc ion per subunit.</text>
</comment>
<comment type="pathway">
    <text evidence="1">Lipid metabolism; malonyl-CoA biosynthesis; malonyl-CoA from acetyl-CoA: step 1/1.</text>
</comment>
<comment type="subunit">
    <text evidence="1">Acetyl-CoA carboxylase is a heterohexamer composed of biotin carboxyl carrier protein (AccB), biotin carboxylase (AccC) and two subunits each of ACCase subunit alpha (AccA) and ACCase subunit beta (AccD).</text>
</comment>
<comment type="subcellular location">
    <subcellularLocation>
        <location evidence="1">Cytoplasm</location>
    </subcellularLocation>
</comment>
<comment type="similarity">
    <text evidence="1">Belongs to the AccD/PCCB family.</text>
</comment>
<organism>
    <name type="scientific">Streptococcus pyogenes serotype M5 (strain Manfredo)</name>
    <dbReference type="NCBI Taxonomy" id="160491"/>
    <lineage>
        <taxon>Bacteria</taxon>
        <taxon>Bacillati</taxon>
        <taxon>Bacillota</taxon>
        <taxon>Bacilli</taxon>
        <taxon>Lactobacillales</taxon>
        <taxon>Streptococcaceae</taxon>
        <taxon>Streptococcus</taxon>
    </lineage>
</organism>
<gene>
    <name evidence="1" type="primary">accD</name>
    <name type="ordered locus">SpyM50360</name>
</gene>
<dbReference type="EC" id="2.1.3.15" evidence="1"/>
<dbReference type="EMBL" id="AM295007">
    <property type="protein sequence ID" value="CAM29702.1"/>
    <property type="molecule type" value="Genomic_DNA"/>
</dbReference>
<dbReference type="RefSeq" id="WP_002983347.1">
    <property type="nucleotide sequence ID" value="NC_009332.1"/>
</dbReference>
<dbReference type="SMR" id="A2RCX9"/>
<dbReference type="KEGG" id="spf:SpyM50360"/>
<dbReference type="HOGENOM" id="CLU_015486_1_1_9"/>
<dbReference type="UniPathway" id="UPA00655">
    <property type="reaction ID" value="UER00711"/>
</dbReference>
<dbReference type="GO" id="GO:0009317">
    <property type="term" value="C:acetyl-CoA carboxylase complex"/>
    <property type="evidence" value="ECO:0007669"/>
    <property type="project" value="InterPro"/>
</dbReference>
<dbReference type="GO" id="GO:0003989">
    <property type="term" value="F:acetyl-CoA carboxylase activity"/>
    <property type="evidence" value="ECO:0007669"/>
    <property type="project" value="InterPro"/>
</dbReference>
<dbReference type="GO" id="GO:0005524">
    <property type="term" value="F:ATP binding"/>
    <property type="evidence" value="ECO:0007669"/>
    <property type="project" value="UniProtKB-KW"/>
</dbReference>
<dbReference type="GO" id="GO:0016743">
    <property type="term" value="F:carboxyl- or carbamoyltransferase activity"/>
    <property type="evidence" value="ECO:0007669"/>
    <property type="project" value="UniProtKB-UniRule"/>
</dbReference>
<dbReference type="GO" id="GO:0008270">
    <property type="term" value="F:zinc ion binding"/>
    <property type="evidence" value="ECO:0007669"/>
    <property type="project" value="UniProtKB-UniRule"/>
</dbReference>
<dbReference type="GO" id="GO:0006633">
    <property type="term" value="P:fatty acid biosynthetic process"/>
    <property type="evidence" value="ECO:0007669"/>
    <property type="project" value="UniProtKB-KW"/>
</dbReference>
<dbReference type="GO" id="GO:2001295">
    <property type="term" value="P:malonyl-CoA biosynthetic process"/>
    <property type="evidence" value="ECO:0007669"/>
    <property type="project" value="UniProtKB-UniRule"/>
</dbReference>
<dbReference type="Gene3D" id="3.90.226.10">
    <property type="entry name" value="2-enoyl-CoA Hydratase, Chain A, domain 1"/>
    <property type="match status" value="1"/>
</dbReference>
<dbReference type="HAMAP" id="MF_01395">
    <property type="entry name" value="AcetylCoA_CT_beta"/>
    <property type="match status" value="1"/>
</dbReference>
<dbReference type="InterPro" id="IPR034733">
    <property type="entry name" value="AcCoA_carboxyl_beta"/>
</dbReference>
<dbReference type="InterPro" id="IPR000438">
    <property type="entry name" value="Acetyl_CoA_COase_Trfase_b_su"/>
</dbReference>
<dbReference type="InterPro" id="IPR029045">
    <property type="entry name" value="ClpP/crotonase-like_dom_sf"/>
</dbReference>
<dbReference type="InterPro" id="IPR011762">
    <property type="entry name" value="COA_CT_N"/>
</dbReference>
<dbReference type="NCBIfam" id="TIGR00515">
    <property type="entry name" value="accD"/>
    <property type="match status" value="1"/>
</dbReference>
<dbReference type="PANTHER" id="PTHR42995">
    <property type="entry name" value="ACETYL-COENZYME A CARBOXYLASE CARBOXYL TRANSFERASE SUBUNIT BETA, CHLOROPLASTIC"/>
    <property type="match status" value="1"/>
</dbReference>
<dbReference type="PANTHER" id="PTHR42995:SF5">
    <property type="entry name" value="ACETYL-COENZYME A CARBOXYLASE CARBOXYL TRANSFERASE SUBUNIT BETA, CHLOROPLASTIC"/>
    <property type="match status" value="1"/>
</dbReference>
<dbReference type="Pfam" id="PF01039">
    <property type="entry name" value="Carboxyl_trans"/>
    <property type="match status" value="1"/>
</dbReference>
<dbReference type="PRINTS" id="PR01070">
    <property type="entry name" value="ACCCTRFRASEB"/>
</dbReference>
<dbReference type="SUPFAM" id="SSF52096">
    <property type="entry name" value="ClpP/crotonase"/>
    <property type="match status" value="1"/>
</dbReference>
<dbReference type="PROSITE" id="PS50980">
    <property type="entry name" value="COA_CT_NTER"/>
    <property type="match status" value="1"/>
</dbReference>
<proteinExistence type="inferred from homology"/>
<feature type="chain" id="PRO_0000389882" description="Acetyl-coenzyme A carboxylase carboxyl transferase subunit beta">
    <location>
        <begin position="1"/>
        <end position="288"/>
    </location>
</feature>
<feature type="domain" description="CoA carboxyltransferase N-terminal" evidence="2">
    <location>
        <begin position="34"/>
        <end position="288"/>
    </location>
</feature>
<feature type="zinc finger region" description="C4-type" evidence="1">
    <location>
        <begin position="38"/>
        <end position="59"/>
    </location>
</feature>
<feature type="binding site" evidence="1">
    <location>
        <position position="38"/>
    </location>
    <ligand>
        <name>Zn(2+)</name>
        <dbReference type="ChEBI" id="CHEBI:29105"/>
    </ligand>
</feature>
<feature type="binding site" evidence="1">
    <location>
        <position position="41"/>
    </location>
    <ligand>
        <name>Zn(2+)</name>
        <dbReference type="ChEBI" id="CHEBI:29105"/>
    </ligand>
</feature>
<feature type="binding site" evidence="1">
    <location>
        <position position="56"/>
    </location>
    <ligand>
        <name>Zn(2+)</name>
        <dbReference type="ChEBI" id="CHEBI:29105"/>
    </ligand>
</feature>
<feature type="binding site" evidence="1">
    <location>
        <position position="59"/>
    </location>
    <ligand>
        <name>Zn(2+)</name>
        <dbReference type="ChEBI" id="CHEBI:29105"/>
    </ligand>
</feature>
<name>ACCD_STRPG</name>
<evidence type="ECO:0000255" key="1">
    <source>
        <dbReference type="HAMAP-Rule" id="MF_01395"/>
    </source>
</evidence>
<evidence type="ECO:0000255" key="2">
    <source>
        <dbReference type="PROSITE-ProRule" id="PRU01136"/>
    </source>
</evidence>